<organism>
    <name type="scientific">Chlamydia trachomatis serovar A (strain ATCC VR-571B / DSM 19440 / HAR-13)</name>
    <dbReference type="NCBI Taxonomy" id="315277"/>
    <lineage>
        <taxon>Bacteria</taxon>
        <taxon>Pseudomonadati</taxon>
        <taxon>Chlamydiota</taxon>
        <taxon>Chlamydiia</taxon>
        <taxon>Chlamydiales</taxon>
        <taxon>Chlamydiaceae</taxon>
        <taxon>Chlamydia/Chlamydophila group</taxon>
        <taxon>Chlamydia</taxon>
    </lineage>
</organism>
<evidence type="ECO:0000255" key="1">
    <source>
        <dbReference type="HAMAP-Rule" id="MF_00514"/>
    </source>
</evidence>
<evidence type="ECO:0000256" key="2">
    <source>
        <dbReference type="SAM" id="MobiDB-lite"/>
    </source>
</evidence>
<evidence type="ECO:0000305" key="3"/>
<gene>
    <name evidence="1" type="primary">rpmI</name>
    <name type="ordered locus">CTA_0909</name>
</gene>
<name>RL35_CHLTA</name>
<feature type="chain" id="PRO_0000258655" description="Large ribosomal subunit protein bL35">
    <location>
        <begin position="1"/>
        <end position="64"/>
    </location>
</feature>
<feature type="region of interest" description="Disordered" evidence="2">
    <location>
        <begin position="1"/>
        <end position="55"/>
    </location>
</feature>
<feature type="compositionally biased region" description="Basic residues" evidence="2">
    <location>
        <begin position="23"/>
        <end position="39"/>
    </location>
</feature>
<comment type="similarity">
    <text evidence="1">Belongs to the bacterial ribosomal protein bL35 family.</text>
</comment>
<dbReference type="EMBL" id="CP000051">
    <property type="protein sequence ID" value="AAX51117.1"/>
    <property type="molecule type" value="Genomic_DNA"/>
</dbReference>
<dbReference type="RefSeq" id="WP_009872221.1">
    <property type="nucleotide sequence ID" value="NC_007429.1"/>
</dbReference>
<dbReference type="SMR" id="Q3KKK5"/>
<dbReference type="GeneID" id="93065712"/>
<dbReference type="KEGG" id="cta:CTA_0909"/>
<dbReference type="HOGENOM" id="CLU_169643_3_0_0"/>
<dbReference type="Proteomes" id="UP000002532">
    <property type="component" value="Chromosome"/>
</dbReference>
<dbReference type="GO" id="GO:0022625">
    <property type="term" value="C:cytosolic large ribosomal subunit"/>
    <property type="evidence" value="ECO:0007669"/>
    <property type="project" value="TreeGrafter"/>
</dbReference>
<dbReference type="GO" id="GO:0003735">
    <property type="term" value="F:structural constituent of ribosome"/>
    <property type="evidence" value="ECO:0007669"/>
    <property type="project" value="InterPro"/>
</dbReference>
<dbReference type="GO" id="GO:0006412">
    <property type="term" value="P:translation"/>
    <property type="evidence" value="ECO:0007669"/>
    <property type="project" value="UniProtKB-UniRule"/>
</dbReference>
<dbReference type="FunFam" id="4.10.410.60:FF:000001">
    <property type="entry name" value="50S ribosomal protein L35"/>
    <property type="match status" value="1"/>
</dbReference>
<dbReference type="Gene3D" id="4.10.410.60">
    <property type="match status" value="1"/>
</dbReference>
<dbReference type="HAMAP" id="MF_00514">
    <property type="entry name" value="Ribosomal_bL35"/>
    <property type="match status" value="1"/>
</dbReference>
<dbReference type="InterPro" id="IPR001706">
    <property type="entry name" value="Ribosomal_bL35"/>
</dbReference>
<dbReference type="InterPro" id="IPR021137">
    <property type="entry name" value="Ribosomal_bL35-like"/>
</dbReference>
<dbReference type="InterPro" id="IPR018265">
    <property type="entry name" value="Ribosomal_bL35_CS"/>
</dbReference>
<dbReference type="InterPro" id="IPR037229">
    <property type="entry name" value="Ribosomal_bL35_sf"/>
</dbReference>
<dbReference type="NCBIfam" id="TIGR00001">
    <property type="entry name" value="rpmI_bact"/>
    <property type="match status" value="1"/>
</dbReference>
<dbReference type="PANTHER" id="PTHR33343">
    <property type="entry name" value="54S RIBOSOMAL PROTEIN BL35M"/>
    <property type="match status" value="1"/>
</dbReference>
<dbReference type="PANTHER" id="PTHR33343:SF1">
    <property type="entry name" value="LARGE RIBOSOMAL SUBUNIT PROTEIN BL35M"/>
    <property type="match status" value="1"/>
</dbReference>
<dbReference type="Pfam" id="PF01632">
    <property type="entry name" value="Ribosomal_L35p"/>
    <property type="match status" value="1"/>
</dbReference>
<dbReference type="PRINTS" id="PR00064">
    <property type="entry name" value="RIBOSOMALL35"/>
</dbReference>
<dbReference type="SUPFAM" id="SSF143034">
    <property type="entry name" value="L35p-like"/>
    <property type="match status" value="1"/>
</dbReference>
<dbReference type="PROSITE" id="PS00936">
    <property type="entry name" value="RIBOSOMAL_L35"/>
    <property type="match status" value="1"/>
</dbReference>
<proteinExistence type="inferred from homology"/>
<protein>
    <recommendedName>
        <fullName evidence="1">Large ribosomal subunit protein bL35</fullName>
    </recommendedName>
    <alternativeName>
        <fullName evidence="3">50S ribosomal protein L35</fullName>
    </alternativeName>
</protein>
<reference key="1">
    <citation type="journal article" date="2005" name="Infect. Immun.">
        <title>Comparative genomic analysis of Chlamydia trachomatis oculotropic and genitotropic strains.</title>
        <authorList>
            <person name="Carlson J.H."/>
            <person name="Porcella S.F."/>
            <person name="McClarty G."/>
            <person name="Caldwell H.D."/>
        </authorList>
    </citation>
    <scope>NUCLEOTIDE SEQUENCE [LARGE SCALE GENOMIC DNA]</scope>
    <source>
        <strain>ATCC VR-571B / DSM 19440 / HAR-13</strain>
    </source>
</reference>
<sequence>MPKMKSNKSVAARFKLTGSGQLKRTRPGKRHKLSKRSSQQKRNLSKQPLVDQGQVGMYKRMMLV</sequence>
<keyword id="KW-0687">Ribonucleoprotein</keyword>
<keyword id="KW-0689">Ribosomal protein</keyword>
<accession>Q3KKK5</accession>